<sequence length="313" mass="34538">MAETFKHTTVLLDEAVNGLSIRSNGIYIDGTFGRGGHSRLILSHLGPEGRLLAIDRDPQAVEVANTIDDARFSIIHGPFSELAEYVEARGLTGKIDGILLDLGVSSPQLDDPERGFSFMRDGPLDMRMDPTRGQSAADWLMKAEADDIAWVLKTFGEERFAKRIARAIVERNRIDPLTRTKALAELIAAASPIREKYKHPATRSFQAIRIYINSELEEIERALDGALTVLAPGGRLSVISFHSLEDRIVKRFIRQHSRGPQVPAGLPLTEAQLRSQGGPTLKSVGKMMPPDDEVADNPRARSSVLRFAERLPS</sequence>
<comment type="function">
    <text evidence="1">Specifically methylates the N4 position of cytidine in position 1402 (C1402) of 16S rRNA.</text>
</comment>
<comment type="catalytic activity">
    <reaction evidence="1">
        <text>cytidine(1402) in 16S rRNA + S-adenosyl-L-methionine = N(4)-methylcytidine(1402) in 16S rRNA + S-adenosyl-L-homocysteine + H(+)</text>
        <dbReference type="Rhea" id="RHEA:42928"/>
        <dbReference type="Rhea" id="RHEA-COMP:10286"/>
        <dbReference type="Rhea" id="RHEA-COMP:10287"/>
        <dbReference type="ChEBI" id="CHEBI:15378"/>
        <dbReference type="ChEBI" id="CHEBI:57856"/>
        <dbReference type="ChEBI" id="CHEBI:59789"/>
        <dbReference type="ChEBI" id="CHEBI:74506"/>
        <dbReference type="ChEBI" id="CHEBI:82748"/>
        <dbReference type="EC" id="2.1.1.199"/>
    </reaction>
</comment>
<comment type="subcellular location">
    <subcellularLocation>
        <location evidence="1">Cytoplasm</location>
    </subcellularLocation>
</comment>
<comment type="similarity">
    <text evidence="1">Belongs to the methyltransferase superfamily. RsmH family.</text>
</comment>
<accession>C6CJW6</accession>
<keyword id="KW-0963">Cytoplasm</keyword>
<keyword id="KW-0489">Methyltransferase</keyword>
<keyword id="KW-0698">rRNA processing</keyword>
<keyword id="KW-0949">S-adenosyl-L-methionine</keyword>
<keyword id="KW-0808">Transferase</keyword>
<feature type="chain" id="PRO_0000386858" description="Ribosomal RNA small subunit methyltransferase H">
    <location>
        <begin position="1"/>
        <end position="313"/>
    </location>
</feature>
<feature type="region of interest" description="Disordered" evidence="2">
    <location>
        <begin position="276"/>
        <end position="300"/>
    </location>
</feature>
<feature type="binding site" evidence="1">
    <location>
        <begin position="35"/>
        <end position="37"/>
    </location>
    <ligand>
        <name>S-adenosyl-L-methionine</name>
        <dbReference type="ChEBI" id="CHEBI:59789"/>
    </ligand>
</feature>
<feature type="binding site" evidence="1">
    <location>
        <position position="55"/>
    </location>
    <ligand>
        <name>S-adenosyl-L-methionine</name>
        <dbReference type="ChEBI" id="CHEBI:59789"/>
    </ligand>
</feature>
<feature type="binding site" evidence="1">
    <location>
        <position position="79"/>
    </location>
    <ligand>
        <name>S-adenosyl-L-methionine</name>
        <dbReference type="ChEBI" id="CHEBI:59789"/>
    </ligand>
</feature>
<feature type="binding site" evidence="1">
    <location>
        <position position="101"/>
    </location>
    <ligand>
        <name>S-adenosyl-L-methionine</name>
        <dbReference type="ChEBI" id="CHEBI:59789"/>
    </ligand>
</feature>
<feature type="binding site" evidence="1">
    <location>
        <position position="108"/>
    </location>
    <ligand>
        <name>S-adenosyl-L-methionine</name>
        <dbReference type="ChEBI" id="CHEBI:59789"/>
    </ligand>
</feature>
<organism>
    <name type="scientific">Dickeya chrysanthemi (strain Ech1591)</name>
    <name type="common">Dickeya zeae (strain Ech1591)</name>
    <dbReference type="NCBI Taxonomy" id="561229"/>
    <lineage>
        <taxon>Bacteria</taxon>
        <taxon>Pseudomonadati</taxon>
        <taxon>Pseudomonadota</taxon>
        <taxon>Gammaproteobacteria</taxon>
        <taxon>Enterobacterales</taxon>
        <taxon>Pectobacteriaceae</taxon>
        <taxon>Dickeya</taxon>
    </lineage>
</organism>
<reference key="1">
    <citation type="submission" date="2009-06" db="EMBL/GenBank/DDBJ databases">
        <title>Complete sequence of Dickeya zeae Ech1591.</title>
        <authorList>
            <consortium name="US DOE Joint Genome Institute"/>
            <person name="Lucas S."/>
            <person name="Copeland A."/>
            <person name="Lapidus A."/>
            <person name="Glavina del Rio T."/>
            <person name="Tice H."/>
            <person name="Bruce D."/>
            <person name="Goodwin L."/>
            <person name="Pitluck S."/>
            <person name="Chertkov O."/>
            <person name="Brettin T."/>
            <person name="Detter J.C."/>
            <person name="Han C."/>
            <person name="Larimer F."/>
            <person name="Land M."/>
            <person name="Hauser L."/>
            <person name="Kyrpides N."/>
            <person name="Ovchinnikova G."/>
            <person name="Balakrishnan V."/>
            <person name="Glasner J."/>
            <person name="Perna N.T."/>
        </authorList>
    </citation>
    <scope>NUCLEOTIDE SEQUENCE [LARGE SCALE GENOMIC DNA]</scope>
    <source>
        <strain>Ech1591</strain>
    </source>
</reference>
<protein>
    <recommendedName>
        <fullName evidence="1">Ribosomal RNA small subunit methyltransferase H</fullName>
        <ecNumber evidence="1">2.1.1.199</ecNumber>
    </recommendedName>
    <alternativeName>
        <fullName evidence="1">16S rRNA m(4)C1402 methyltransferase</fullName>
    </alternativeName>
    <alternativeName>
        <fullName evidence="1">rRNA (cytosine-N(4)-)-methyltransferase RsmH</fullName>
    </alternativeName>
</protein>
<proteinExistence type="inferred from homology"/>
<evidence type="ECO:0000255" key="1">
    <source>
        <dbReference type="HAMAP-Rule" id="MF_01007"/>
    </source>
</evidence>
<evidence type="ECO:0000256" key="2">
    <source>
        <dbReference type="SAM" id="MobiDB-lite"/>
    </source>
</evidence>
<dbReference type="EC" id="2.1.1.199" evidence="1"/>
<dbReference type="EMBL" id="CP001655">
    <property type="protein sequence ID" value="ACT05484.1"/>
    <property type="molecule type" value="Genomic_DNA"/>
</dbReference>
<dbReference type="RefSeq" id="WP_012768365.1">
    <property type="nucleotide sequence ID" value="NC_012912.1"/>
</dbReference>
<dbReference type="SMR" id="C6CJW6"/>
<dbReference type="STRING" id="561229.Dd1591_0602"/>
<dbReference type="GeneID" id="45078726"/>
<dbReference type="KEGG" id="dze:Dd1591_0602"/>
<dbReference type="eggNOG" id="COG0275">
    <property type="taxonomic scope" value="Bacteria"/>
</dbReference>
<dbReference type="HOGENOM" id="CLU_038422_2_0_6"/>
<dbReference type="OrthoDB" id="9806637at2"/>
<dbReference type="Proteomes" id="UP000002735">
    <property type="component" value="Chromosome"/>
</dbReference>
<dbReference type="GO" id="GO:0005737">
    <property type="term" value="C:cytoplasm"/>
    <property type="evidence" value="ECO:0007669"/>
    <property type="project" value="UniProtKB-SubCell"/>
</dbReference>
<dbReference type="GO" id="GO:0071424">
    <property type="term" value="F:rRNA (cytosine-N4-)-methyltransferase activity"/>
    <property type="evidence" value="ECO:0007669"/>
    <property type="project" value="UniProtKB-UniRule"/>
</dbReference>
<dbReference type="GO" id="GO:0070475">
    <property type="term" value="P:rRNA base methylation"/>
    <property type="evidence" value="ECO:0007669"/>
    <property type="project" value="UniProtKB-UniRule"/>
</dbReference>
<dbReference type="FunFam" id="1.10.150.170:FF:000001">
    <property type="entry name" value="Ribosomal RNA small subunit methyltransferase H"/>
    <property type="match status" value="1"/>
</dbReference>
<dbReference type="Gene3D" id="1.10.150.170">
    <property type="entry name" value="Putative methyltransferase TM0872, insert domain"/>
    <property type="match status" value="1"/>
</dbReference>
<dbReference type="Gene3D" id="3.40.50.150">
    <property type="entry name" value="Vaccinia Virus protein VP39"/>
    <property type="match status" value="1"/>
</dbReference>
<dbReference type="HAMAP" id="MF_01007">
    <property type="entry name" value="16SrRNA_methyltr_H"/>
    <property type="match status" value="1"/>
</dbReference>
<dbReference type="InterPro" id="IPR002903">
    <property type="entry name" value="RsmH"/>
</dbReference>
<dbReference type="InterPro" id="IPR023397">
    <property type="entry name" value="SAM-dep_MeTrfase_MraW_recog"/>
</dbReference>
<dbReference type="InterPro" id="IPR029063">
    <property type="entry name" value="SAM-dependent_MTases_sf"/>
</dbReference>
<dbReference type="NCBIfam" id="TIGR00006">
    <property type="entry name" value="16S rRNA (cytosine(1402)-N(4))-methyltransferase RsmH"/>
    <property type="match status" value="1"/>
</dbReference>
<dbReference type="PANTHER" id="PTHR11265:SF0">
    <property type="entry name" value="12S RRNA N4-METHYLCYTIDINE METHYLTRANSFERASE"/>
    <property type="match status" value="1"/>
</dbReference>
<dbReference type="PANTHER" id="PTHR11265">
    <property type="entry name" value="S-ADENOSYL-METHYLTRANSFERASE MRAW"/>
    <property type="match status" value="1"/>
</dbReference>
<dbReference type="Pfam" id="PF01795">
    <property type="entry name" value="Methyltransf_5"/>
    <property type="match status" value="1"/>
</dbReference>
<dbReference type="PIRSF" id="PIRSF004486">
    <property type="entry name" value="MraW"/>
    <property type="match status" value="1"/>
</dbReference>
<dbReference type="SUPFAM" id="SSF81799">
    <property type="entry name" value="Putative methyltransferase TM0872, insert domain"/>
    <property type="match status" value="1"/>
</dbReference>
<dbReference type="SUPFAM" id="SSF53335">
    <property type="entry name" value="S-adenosyl-L-methionine-dependent methyltransferases"/>
    <property type="match status" value="1"/>
</dbReference>
<name>RSMH_DICC1</name>
<gene>
    <name evidence="1" type="primary">rsmH</name>
    <name type="synonym">mraW</name>
    <name type="ordered locus">Dd1591_0602</name>
</gene>